<gene>
    <name type="primary">MT-CO3</name>
    <name type="synonym">COIII</name>
    <name type="synonym">COXIII</name>
    <name type="synonym">MTCO3</name>
</gene>
<sequence length="261" mass="29935">MTHQTHAYHMVNPSPWPLTGALSALLMTSGLIMWFHYNSMALLTLGFTTNLLTMYQWWRDVIREGTFQGHHTPIVQKGLRYGMVLFIVSEVFFFAGFFWAFYHSSLAPTPELGGCWPPTGIIPLNPLEVPLLNTSVLLASGVSITWAHHSLMEGNRKHMLQALFITISLGVYFTLLQASEYYETSFTISDGVYGSTFFMATGFHGLHVIIGSTFLIVCFLRQLYYHFTSNHHFGFEAAAWYWHFVDVVWLFLYVSIYWWGS</sequence>
<organism>
    <name type="scientific">Canis lupus familiaris</name>
    <name type="common">Dog</name>
    <name type="synonym">Canis familiaris</name>
    <dbReference type="NCBI Taxonomy" id="9615"/>
    <lineage>
        <taxon>Eukaryota</taxon>
        <taxon>Metazoa</taxon>
        <taxon>Chordata</taxon>
        <taxon>Craniata</taxon>
        <taxon>Vertebrata</taxon>
        <taxon>Euteleostomi</taxon>
        <taxon>Mammalia</taxon>
        <taxon>Eutheria</taxon>
        <taxon>Laurasiatheria</taxon>
        <taxon>Carnivora</taxon>
        <taxon>Caniformia</taxon>
        <taxon>Canidae</taxon>
        <taxon>Canis</taxon>
    </lineage>
</organism>
<accession>Q9ZZ61</accession>
<accession>Q66QB5</accession>
<comment type="function">
    <text evidence="2">Component of the cytochrome c oxidase, the last enzyme in the mitochondrial electron transport chain which drives oxidative phosphorylation. The respiratory chain contains 3 multisubunit complexes succinate dehydrogenase (complex II, CII), ubiquinol-cytochrome c oxidoreductase (cytochrome b-c1 complex, complex III, CIII) and cytochrome c oxidase (complex IV, CIV), that cooperate to transfer electrons derived from NADH and succinate to molecular oxygen, creating an electrochemical gradient over the inner membrane that drives transmembrane transport and the ATP synthase. Cytochrome c oxidase is the component of the respiratory chain that catalyzes the reduction of oxygen to water. Electrons originating from reduced cytochrome c in the intermembrane space (IMS) are transferred via the dinuclear copper A center (CU(A)) of subunit 2 and heme A of subunit 1 to the active site in subunit 1, a binuclear center (BNC) formed by heme A3 and copper B (CU(B)). The BNC reduces molecular oxygen to 2 water molecules using 4 electrons from cytochrome c in the IMS and 4 protons from the mitochondrial matrix.</text>
</comment>
<comment type="catalytic activity">
    <reaction evidence="2">
        <text>4 Fe(II)-[cytochrome c] + O2 + 8 H(+)(in) = 4 Fe(III)-[cytochrome c] + 2 H2O + 4 H(+)(out)</text>
        <dbReference type="Rhea" id="RHEA:11436"/>
        <dbReference type="Rhea" id="RHEA-COMP:10350"/>
        <dbReference type="Rhea" id="RHEA-COMP:14399"/>
        <dbReference type="ChEBI" id="CHEBI:15377"/>
        <dbReference type="ChEBI" id="CHEBI:15378"/>
        <dbReference type="ChEBI" id="CHEBI:15379"/>
        <dbReference type="ChEBI" id="CHEBI:29033"/>
        <dbReference type="ChEBI" id="CHEBI:29034"/>
        <dbReference type="EC" id="7.1.1.9"/>
    </reaction>
    <physiologicalReaction direction="left-to-right" evidence="2">
        <dbReference type="Rhea" id="RHEA:11437"/>
    </physiologicalReaction>
</comment>
<comment type="subunit">
    <text evidence="1">Component of the cytochrome c oxidase (complex IV, CIV), a multisubunit enzyme composed of 14 subunits. The complex is composed of a catalytic core of 3 subunits MT-CO1, MT-CO2 and MT-CO3, encoded in the mitochondrial DNA, and 11 supernumerary subunits COX4I, COX5A, COX5B, COX6A, COX6B, COX6C, COX7A, COX7B, COX7C, COX8 and NDUFA4, which are encoded in the nuclear genome. The complex exists as a monomer or a dimer and forms supercomplexes (SCs) in the inner mitochondrial membrane with NADH-ubiquinone oxidoreductase (complex I, CI) and ubiquinol-cytochrome c oxidoreductase (cytochrome b-c1 complex, complex III, CIII), resulting in different assemblies (supercomplex SCI(1)III(2)IV(1) and megacomplex MCI(2)III(2)IV(2)).</text>
</comment>
<comment type="subcellular location">
    <subcellularLocation>
        <location evidence="1">Mitochondrion inner membrane</location>
        <topology evidence="1">Multi-pass membrane protein</topology>
    </subcellularLocation>
</comment>
<comment type="similarity">
    <text evidence="3">Belongs to the cytochrome c oxidase subunit 3 family.</text>
</comment>
<proteinExistence type="inferred from homology"/>
<evidence type="ECO:0000250" key="1">
    <source>
        <dbReference type="UniProtKB" id="P00415"/>
    </source>
</evidence>
<evidence type="ECO:0000250" key="2">
    <source>
        <dbReference type="UniProtKB" id="P00420"/>
    </source>
</evidence>
<evidence type="ECO:0000305" key="3"/>
<evidence type="ECO:0000312" key="4">
    <source>
        <dbReference type="Proteomes" id="UP000002254"/>
    </source>
</evidence>
<keyword id="KW-0472">Membrane</keyword>
<keyword id="KW-0496">Mitochondrion</keyword>
<keyword id="KW-0999">Mitochondrion inner membrane</keyword>
<keyword id="KW-1185">Reference proteome</keyword>
<keyword id="KW-1278">Translocase</keyword>
<keyword id="KW-0812">Transmembrane</keyword>
<keyword id="KW-1133">Transmembrane helix</keyword>
<protein>
    <recommendedName>
        <fullName>Cytochrome c oxidase subunit 3</fullName>
        <ecNumber>7.1.1.9</ecNumber>
    </recommendedName>
    <alternativeName>
        <fullName>Cytochrome c oxidase polypeptide III</fullName>
    </alternativeName>
</protein>
<feature type="chain" id="PRO_0000183751" description="Cytochrome c oxidase subunit 3">
    <location>
        <begin position="1"/>
        <end position="261"/>
    </location>
</feature>
<feature type="topological domain" description="Mitochondrial matrix" evidence="1">
    <location>
        <begin position="1"/>
        <end position="15"/>
    </location>
</feature>
<feature type="transmembrane region" description="Helical; Name=I" evidence="1">
    <location>
        <begin position="16"/>
        <end position="34"/>
    </location>
</feature>
<feature type="topological domain" description="Mitochondrial intermembrane" evidence="1">
    <location>
        <begin position="35"/>
        <end position="40"/>
    </location>
</feature>
<feature type="transmembrane region" description="Helical; Name=II" evidence="1">
    <location>
        <begin position="41"/>
        <end position="66"/>
    </location>
</feature>
<feature type="topological domain" description="Mitochondrial matrix" evidence="1">
    <location>
        <begin position="67"/>
        <end position="72"/>
    </location>
</feature>
<feature type="transmembrane region" description="Helical; Name=III" evidence="1">
    <location>
        <begin position="73"/>
        <end position="105"/>
    </location>
</feature>
<feature type="topological domain" description="Mitochondrial intermembrane" evidence="1">
    <location>
        <begin position="106"/>
        <end position="128"/>
    </location>
</feature>
<feature type="transmembrane region" description="Helical; Name=IV" evidence="1">
    <location>
        <begin position="129"/>
        <end position="152"/>
    </location>
</feature>
<feature type="topological domain" description="Mitochondrial matrix" evidence="1">
    <location>
        <begin position="153"/>
        <end position="155"/>
    </location>
</feature>
<feature type="transmembrane region" description="Helical; Name=V" evidence="1">
    <location>
        <begin position="156"/>
        <end position="183"/>
    </location>
</feature>
<feature type="topological domain" description="Mitochondrial intermembrane" evidence="1">
    <location>
        <begin position="184"/>
        <end position="190"/>
    </location>
</feature>
<feature type="transmembrane region" description="Helical; Name=VI" evidence="1">
    <location>
        <begin position="191"/>
        <end position="223"/>
    </location>
</feature>
<feature type="topological domain" description="Mitochondrial matrix" evidence="1">
    <location>
        <begin position="224"/>
        <end position="232"/>
    </location>
</feature>
<feature type="transmembrane region" description="Helical; Name=VII" evidence="1">
    <location>
        <begin position="233"/>
        <end position="256"/>
    </location>
</feature>
<feature type="topological domain" description="Mitochondrial intermembrane" evidence="1">
    <location>
        <begin position="257"/>
        <end position="261"/>
    </location>
</feature>
<feature type="sequence conflict" description="In Ref. 1; AAD04769." evidence="3" ref="1">
    <original>Y</original>
    <variation>C</variation>
    <location>
        <position position="55"/>
    </location>
</feature>
<geneLocation type="mitochondrion"/>
<dbReference type="EC" id="7.1.1.9"/>
<dbReference type="EMBL" id="U96639">
    <property type="protein sequence ID" value="AAD04769.2"/>
    <property type="molecule type" value="Genomic_DNA"/>
</dbReference>
<dbReference type="EMBL" id="AY729880">
    <property type="protein sequence ID" value="AAU12153.1"/>
    <property type="molecule type" value="Genomic_DNA"/>
</dbReference>
<dbReference type="PIR" id="T11499">
    <property type="entry name" value="T11499"/>
</dbReference>
<dbReference type="SMR" id="Q9ZZ61"/>
<dbReference type="FunCoup" id="Q9ZZ61">
    <property type="interactions" value="16"/>
</dbReference>
<dbReference type="STRING" id="9615.ENSCAFP00000030315"/>
<dbReference type="PaxDb" id="9612-ENSCAFP00000030315"/>
<dbReference type="KEGG" id="cfa:804480"/>
<dbReference type="CTD" id="4514"/>
<dbReference type="eggNOG" id="KOG4664">
    <property type="taxonomic scope" value="Eukaryota"/>
</dbReference>
<dbReference type="InParanoid" id="Q9ZZ61"/>
<dbReference type="Proteomes" id="UP000002254">
    <property type="component" value="Mitochondrion"/>
</dbReference>
<dbReference type="Proteomes" id="UP000694429">
    <property type="component" value="Unplaced"/>
</dbReference>
<dbReference type="Proteomes" id="UP000694542">
    <property type="component" value="Unassembled WGS sequence"/>
</dbReference>
<dbReference type="Proteomes" id="UP000805418">
    <property type="component" value="Mitochondrion MT"/>
</dbReference>
<dbReference type="GO" id="GO:0005743">
    <property type="term" value="C:mitochondrial inner membrane"/>
    <property type="evidence" value="ECO:0007669"/>
    <property type="project" value="UniProtKB-SubCell"/>
</dbReference>
<dbReference type="GO" id="GO:0005739">
    <property type="term" value="C:mitochondrion"/>
    <property type="evidence" value="ECO:0000318"/>
    <property type="project" value="GO_Central"/>
</dbReference>
<dbReference type="GO" id="GO:0045277">
    <property type="term" value="C:respiratory chain complex IV"/>
    <property type="evidence" value="ECO:0000250"/>
    <property type="project" value="UniProtKB"/>
</dbReference>
<dbReference type="GO" id="GO:0004129">
    <property type="term" value="F:cytochrome-c oxidase activity"/>
    <property type="evidence" value="ECO:0007669"/>
    <property type="project" value="UniProtKB-EC"/>
</dbReference>
<dbReference type="GO" id="GO:0006123">
    <property type="term" value="P:mitochondrial electron transport, cytochrome c to oxygen"/>
    <property type="evidence" value="ECO:0000318"/>
    <property type="project" value="GO_Central"/>
</dbReference>
<dbReference type="GO" id="GO:0008535">
    <property type="term" value="P:respiratory chain complex IV assembly"/>
    <property type="evidence" value="ECO:0000250"/>
    <property type="project" value="UniProtKB"/>
</dbReference>
<dbReference type="CDD" id="cd01665">
    <property type="entry name" value="Cyt_c_Oxidase_III"/>
    <property type="match status" value="1"/>
</dbReference>
<dbReference type="FunFam" id="1.10.287.70:FF:000048">
    <property type="entry name" value="Cytochrome c oxidase subunit 3"/>
    <property type="match status" value="1"/>
</dbReference>
<dbReference type="FunFam" id="1.20.120.80:FF:000002">
    <property type="entry name" value="Cytochrome c oxidase subunit 3"/>
    <property type="match status" value="1"/>
</dbReference>
<dbReference type="Gene3D" id="1.10.287.70">
    <property type="match status" value="1"/>
</dbReference>
<dbReference type="Gene3D" id="1.20.120.80">
    <property type="entry name" value="Cytochrome c oxidase, subunit III, four-helix bundle"/>
    <property type="match status" value="1"/>
</dbReference>
<dbReference type="InterPro" id="IPR024791">
    <property type="entry name" value="Cyt_c/ubiquinol_Oxase_su3"/>
</dbReference>
<dbReference type="InterPro" id="IPR033945">
    <property type="entry name" value="Cyt_c_oxase_su3_dom"/>
</dbReference>
<dbReference type="InterPro" id="IPR000298">
    <property type="entry name" value="Cyt_c_oxidase-like_su3"/>
</dbReference>
<dbReference type="InterPro" id="IPR035973">
    <property type="entry name" value="Cyt_c_oxidase_su3-like_sf"/>
</dbReference>
<dbReference type="InterPro" id="IPR013833">
    <property type="entry name" value="Cyt_c_oxidase_su3_a-hlx"/>
</dbReference>
<dbReference type="PANTHER" id="PTHR11403:SF7">
    <property type="entry name" value="CYTOCHROME C OXIDASE SUBUNIT 3"/>
    <property type="match status" value="1"/>
</dbReference>
<dbReference type="PANTHER" id="PTHR11403">
    <property type="entry name" value="CYTOCHROME C OXIDASE SUBUNIT III"/>
    <property type="match status" value="1"/>
</dbReference>
<dbReference type="Pfam" id="PF00510">
    <property type="entry name" value="COX3"/>
    <property type="match status" value="1"/>
</dbReference>
<dbReference type="SUPFAM" id="SSF81452">
    <property type="entry name" value="Cytochrome c oxidase subunit III-like"/>
    <property type="match status" value="1"/>
</dbReference>
<dbReference type="PROSITE" id="PS50253">
    <property type="entry name" value="COX3"/>
    <property type="match status" value="1"/>
</dbReference>
<name>COX3_CANLF</name>
<reference key="1">
    <citation type="journal article" date="1998" name="Mol. Phylogenet. Evol.">
        <title>The complete nucleotide sequence of the domestic dog (Canis familiaris) mitochondrial genome.</title>
        <authorList>
            <person name="Kim K.S."/>
            <person name="Lee S.E."/>
            <person name="Jeong H.W."/>
            <person name="Ha J.H."/>
        </authorList>
    </citation>
    <scope>NUCLEOTIDE SEQUENCE [GENOMIC DNA]</scope>
    <source>
        <strain evidence="4">Boxer</strain>
    </source>
</reference>
<reference key="2">
    <citation type="submission" date="2000-04" db="EMBL/GenBank/DDBJ databases">
        <authorList>
            <person name="Kim K.S."/>
            <person name="Lee S.E."/>
            <person name="Jeong H.W."/>
            <person name="Jeong S.Y."/>
            <person name="Sohn H.S."/>
            <person name="Ha J.H."/>
        </authorList>
    </citation>
    <scope>SEQUENCE REVISION TO 91-92</scope>
</reference>
<reference key="3">
    <citation type="submission" date="2004-08" db="EMBL/GenBank/DDBJ databases">
        <title>The complete mitochondrial DNA sequence of the Beagle dog (Canis familiaris).</title>
        <authorList>
            <person name="Zhu S."/>
            <person name="Xu Q."/>
            <person name="Chang H."/>
        </authorList>
    </citation>
    <scope>NUCLEOTIDE SEQUENCE [GENOMIC DNA]</scope>
    <source>
        <strain>Beagle</strain>
    </source>
</reference>